<sequence>MTLQAAPRSAAAQQREPDLRQEVHDAARRARVAARLLAVVPTGVKDRALHAAADAILAHVDRILSANAEDLDAARAADTPAAMLDRLALNPQRVDGIAAGLRQVAGLPGPVGEVLRGYTLPNGLQLRQQRVPLGVVGMIYEGRPNVTVDAFGLTLKSGNAALLRGSSSAARSNEALVNVLRSALDSEQLPADAVQLLSSADRSTVTHLIQARGLVDVAIPRGGAGLIDAVVRDAQVPTIETGVGNCHVYVHEAADLDVAERILLNSKTRRPSVCNAAETLLVDAAIAEHAMPRLIGALQDAGVTVHLDADEQDLRREYLAMEIAVAVVDGVDGAIAHINEYGTGHTEAIVTTNLAAAQRFTERIDAAAVMVNASTAFTDGEQFGFGAEIGISTQKLHARGPMGLPELTSTKWIVRGEGHTRPA</sequence>
<protein>
    <recommendedName>
        <fullName evidence="1">Gamma-glutamyl phosphate reductase</fullName>
        <shortName evidence="1">GPR</shortName>
        <ecNumber evidence="1">1.2.1.41</ecNumber>
    </recommendedName>
    <alternativeName>
        <fullName evidence="1">Glutamate-5-semialdehyde dehydrogenase</fullName>
    </alternativeName>
    <alternativeName>
        <fullName evidence="1">Glutamyl-gamma-semialdehyde dehydrogenase</fullName>
        <shortName evidence="1">GSA dehydrogenase</shortName>
    </alternativeName>
</protein>
<feature type="chain" id="PRO_0000340897" description="Gamma-glutamyl phosphate reductase">
    <location>
        <begin position="1"/>
        <end position="423"/>
    </location>
</feature>
<feature type="region of interest" description="Disordered" evidence="2">
    <location>
        <begin position="1"/>
        <end position="25"/>
    </location>
</feature>
<feature type="compositionally biased region" description="Low complexity" evidence="2">
    <location>
        <begin position="1"/>
        <end position="14"/>
    </location>
</feature>
<feature type="compositionally biased region" description="Basic and acidic residues" evidence="2">
    <location>
        <begin position="15"/>
        <end position="25"/>
    </location>
</feature>
<organism>
    <name type="scientific">Mycobacterium ulcerans (strain Agy99)</name>
    <dbReference type="NCBI Taxonomy" id="362242"/>
    <lineage>
        <taxon>Bacteria</taxon>
        <taxon>Bacillati</taxon>
        <taxon>Actinomycetota</taxon>
        <taxon>Actinomycetes</taxon>
        <taxon>Mycobacteriales</taxon>
        <taxon>Mycobacteriaceae</taxon>
        <taxon>Mycobacterium</taxon>
        <taxon>Mycobacterium ulcerans group</taxon>
    </lineage>
</organism>
<proteinExistence type="inferred from homology"/>
<name>PROA_MYCUA</name>
<comment type="function">
    <text evidence="1">Catalyzes the NADPH-dependent reduction of L-glutamate 5-phosphate into L-glutamate 5-semialdehyde and phosphate. The product spontaneously undergoes cyclization to form 1-pyrroline-5-carboxylate.</text>
</comment>
<comment type="catalytic activity">
    <reaction evidence="1">
        <text>L-glutamate 5-semialdehyde + phosphate + NADP(+) = L-glutamyl 5-phosphate + NADPH + H(+)</text>
        <dbReference type="Rhea" id="RHEA:19541"/>
        <dbReference type="ChEBI" id="CHEBI:15378"/>
        <dbReference type="ChEBI" id="CHEBI:43474"/>
        <dbReference type="ChEBI" id="CHEBI:57783"/>
        <dbReference type="ChEBI" id="CHEBI:58066"/>
        <dbReference type="ChEBI" id="CHEBI:58274"/>
        <dbReference type="ChEBI" id="CHEBI:58349"/>
        <dbReference type="EC" id="1.2.1.41"/>
    </reaction>
</comment>
<comment type="pathway">
    <text evidence="1">Amino-acid biosynthesis; L-proline biosynthesis; L-glutamate 5-semialdehyde from L-glutamate: step 2/2.</text>
</comment>
<comment type="subcellular location">
    <subcellularLocation>
        <location evidence="1">Cytoplasm</location>
    </subcellularLocation>
</comment>
<comment type="similarity">
    <text evidence="1">Belongs to the gamma-glutamyl phosphate reductase family.</text>
</comment>
<keyword id="KW-0028">Amino-acid biosynthesis</keyword>
<keyword id="KW-0963">Cytoplasm</keyword>
<keyword id="KW-0521">NADP</keyword>
<keyword id="KW-0560">Oxidoreductase</keyword>
<keyword id="KW-0641">Proline biosynthesis</keyword>
<accession>A0PU04</accession>
<dbReference type="EC" id="1.2.1.41" evidence="1"/>
<dbReference type="EMBL" id="CP000325">
    <property type="protein sequence ID" value="ABL05823.1"/>
    <property type="molecule type" value="Genomic_DNA"/>
</dbReference>
<dbReference type="RefSeq" id="WP_011741428.1">
    <property type="nucleotide sequence ID" value="NC_008611.1"/>
</dbReference>
<dbReference type="SMR" id="A0PU04"/>
<dbReference type="KEGG" id="mul:MUL_3696"/>
<dbReference type="eggNOG" id="COG0014">
    <property type="taxonomic scope" value="Bacteria"/>
</dbReference>
<dbReference type="HOGENOM" id="CLU_030231_0_0_11"/>
<dbReference type="UniPathway" id="UPA00098">
    <property type="reaction ID" value="UER00360"/>
</dbReference>
<dbReference type="Proteomes" id="UP000000765">
    <property type="component" value="Chromosome"/>
</dbReference>
<dbReference type="GO" id="GO:0005737">
    <property type="term" value="C:cytoplasm"/>
    <property type="evidence" value="ECO:0007669"/>
    <property type="project" value="UniProtKB-SubCell"/>
</dbReference>
<dbReference type="GO" id="GO:0004350">
    <property type="term" value="F:glutamate-5-semialdehyde dehydrogenase activity"/>
    <property type="evidence" value="ECO:0007669"/>
    <property type="project" value="UniProtKB-UniRule"/>
</dbReference>
<dbReference type="GO" id="GO:0050661">
    <property type="term" value="F:NADP binding"/>
    <property type="evidence" value="ECO:0007669"/>
    <property type="project" value="InterPro"/>
</dbReference>
<dbReference type="GO" id="GO:0055129">
    <property type="term" value="P:L-proline biosynthetic process"/>
    <property type="evidence" value="ECO:0007669"/>
    <property type="project" value="UniProtKB-UniRule"/>
</dbReference>
<dbReference type="CDD" id="cd07079">
    <property type="entry name" value="ALDH_F18-19_ProA-GPR"/>
    <property type="match status" value="1"/>
</dbReference>
<dbReference type="FunFam" id="3.40.309.10:FF:000006">
    <property type="entry name" value="Gamma-glutamyl phosphate reductase"/>
    <property type="match status" value="1"/>
</dbReference>
<dbReference type="Gene3D" id="3.40.605.10">
    <property type="entry name" value="Aldehyde Dehydrogenase, Chain A, domain 1"/>
    <property type="match status" value="1"/>
</dbReference>
<dbReference type="Gene3D" id="3.40.309.10">
    <property type="entry name" value="Aldehyde Dehydrogenase, Chain A, domain 2"/>
    <property type="match status" value="1"/>
</dbReference>
<dbReference type="HAMAP" id="MF_00412">
    <property type="entry name" value="ProA"/>
    <property type="match status" value="1"/>
</dbReference>
<dbReference type="InterPro" id="IPR016161">
    <property type="entry name" value="Ald_DH/histidinol_DH"/>
</dbReference>
<dbReference type="InterPro" id="IPR016163">
    <property type="entry name" value="Ald_DH_C"/>
</dbReference>
<dbReference type="InterPro" id="IPR016162">
    <property type="entry name" value="Ald_DH_N"/>
</dbReference>
<dbReference type="InterPro" id="IPR015590">
    <property type="entry name" value="Aldehyde_DH_dom"/>
</dbReference>
<dbReference type="InterPro" id="IPR020593">
    <property type="entry name" value="G-glutamylP_reductase_CS"/>
</dbReference>
<dbReference type="InterPro" id="IPR012134">
    <property type="entry name" value="Glu-5-SA_DH"/>
</dbReference>
<dbReference type="InterPro" id="IPR000965">
    <property type="entry name" value="GPR_dom"/>
</dbReference>
<dbReference type="NCBIfam" id="NF001221">
    <property type="entry name" value="PRK00197.1"/>
    <property type="match status" value="1"/>
</dbReference>
<dbReference type="NCBIfam" id="TIGR00407">
    <property type="entry name" value="proA"/>
    <property type="match status" value="1"/>
</dbReference>
<dbReference type="PANTHER" id="PTHR11063:SF8">
    <property type="entry name" value="DELTA-1-PYRROLINE-5-CARBOXYLATE SYNTHASE"/>
    <property type="match status" value="1"/>
</dbReference>
<dbReference type="PANTHER" id="PTHR11063">
    <property type="entry name" value="GLUTAMATE SEMIALDEHYDE DEHYDROGENASE"/>
    <property type="match status" value="1"/>
</dbReference>
<dbReference type="Pfam" id="PF00171">
    <property type="entry name" value="Aldedh"/>
    <property type="match status" value="2"/>
</dbReference>
<dbReference type="PIRSF" id="PIRSF000151">
    <property type="entry name" value="GPR"/>
    <property type="match status" value="1"/>
</dbReference>
<dbReference type="SUPFAM" id="SSF53720">
    <property type="entry name" value="ALDH-like"/>
    <property type="match status" value="1"/>
</dbReference>
<dbReference type="PROSITE" id="PS01223">
    <property type="entry name" value="PROA"/>
    <property type="match status" value="1"/>
</dbReference>
<reference key="1">
    <citation type="journal article" date="2007" name="Genome Res.">
        <title>Reductive evolution and niche adaptation inferred from the genome of Mycobacterium ulcerans, the causative agent of Buruli ulcer.</title>
        <authorList>
            <person name="Stinear T.P."/>
            <person name="Seemann T."/>
            <person name="Pidot S."/>
            <person name="Frigui W."/>
            <person name="Reysset G."/>
            <person name="Garnier T."/>
            <person name="Meurice G."/>
            <person name="Simon D."/>
            <person name="Bouchier C."/>
            <person name="Ma L."/>
            <person name="Tichit M."/>
            <person name="Porter J.L."/>
            <person name="Ryan J."/>
            <person name="Johnson P.D.R."/>
            <person name="Davies J.K."/>
            <person name="Jenkin G.A."/>
            <person name="Small P.L.C."/>
            <person name="Jones L.M."/>
            <person name="Tekaia F."/>
            <person name="Laval F."/>
            <person name="Daffe M."/>
            <person name="Parkhill J."/>
            <person name="Cole S.T."/>
        </authorList>
    </citation>
    <scope>NUCLEOTIDE SEQUENCE [LARGE SCALE GENOMIC DNA]</scope>
    <source>
        <strain>Agy99</strain>
    </source>
</reference>
<evidence type="ECO:0000255" key="1">
    <source>
        <dbReference type="HAMAP-Rule" id="MF_00412"/>
    </source>
</evidence>
<evidence type="ECO:0000256" key="2">
    <source>
        <dbReference type="SAM" id="MobiDB-lite"/>
    </source>
</evidence>
<gene>
    <name evidence="1" type="primary">proA</name>
    <name type="ordered locus">MUL_3696</name>
</gene>